<name>BL1S1_RAT</name>
<proteinExistence type="inferred from homology"/>
<sequence>MLSRLLKEHQAKQNERKELQEKRRREAITAATCLTEALVDHLNVGVAQAYMNQRKLDHEVKTLQVQAAQFAKQTGQWIGMVENFNQALKEIGDVENWARSIELDMRTIATALEYVYKGQLQSAPS</sequence>
<keyword id="KW-0175">Coiled coil</keyword>
<keyword id="KW-0963">Cytoplasm</keyword>
<keyword id="KW-0458">Lysosome</keyword>
<keyword id="KW-0472">Membrane</keyword>
<keyword id="KW-0496">Mitochondrion</keyword>
<keyword id="KW-1185">Reference proteome</keyword>
<keyword id="KW-0808">Transferase</keyword>
<organism>
    <name type="scientific">Rattus norvegicus</name>
    <name type="common">Rat</name>
    <dbReference type="NCBI Taxonomy" id="10116"/>
    <lineage>
        <taxon>Eukaryota</taxon>
        <taxon>Metazoa</taxon>
        <taxon>Chordata</taxon>
        <taxon>Craniata</taxon>
        <taxon>Vertebrata</taxon>
        <taxon>Euteleostomi</taxon>
        <taxon>Mammalia</taxon>
        <taxon>Eutheria</taxon>
        <taxon>Euarchontoglires</taxon>
        <taxon>Glires</taxon>
        <taxon>Rodentia</taxon>
        <taxon>Myomorpha</taxon>
        <taxon>Muroidea</taxon>
        <taxon>Muridae</taxon>
        <taxon>Murinae</taxon>
        <taxon>Rattus</taxon>
    </lineage>
</organism>
<evidence type="ECO:0000250" key="1">
    <source>
        <dbReference type="UniProtKB" id="O55102"/>
    </source>
</evidence>
<evidence type="ECO:0000250" key="2">
    <source>
        <dbReference type="UniProtKB" id="P78537"/>
    </source>
</evidence>
<evidence type="ECO:0000255" key="3"/>
<evidence type="ECO:0000305" key="4"/>
<reference key="1">
    <citation type="submission" date="2005-09" db="EMBL/GenBank/DDBJ databases">
        <authorList>
            <person name="Mural R.J."/>
            <person name="Adams M.D."/>
            <person name="Myers E.W."/>
            <person name="Smith H.O."/>
            <person name="Venter J.C."/>
        </authorList>
    </citation>
    <scope>NUCLEOTIDE SEQUENCE [LARGE SCALE GENOMIC DNA]</scope>
</reference>
<comment type="function">
    <text evidence="2">Component of the BLOC-1 complex, a complex that is required for normal biogenesis of lysosome-related organelles (LRO), such as platelet dense granules and melanosomes. In concert with the AP-3 complex, the BLOC-1 complex is required to target membrane protein cargos into vesicles assembled at cell bodies for delivery into neurites and nerve terminals. The BLOC-1 complex, in association with SNARE proteins, is also proposed to be involved in neurite extension. As part of the BORC complex may play a role in lysosomes movement and localization at the cell periphery. The BORC complex is most probably associated with the cytosolic face of lysosomes, may recruit ARL8B and couple lysosomes to microtubule plus-end-directed kinesin motor.</text>
</comment>
<comment type="function">
    <text evidence="2">Acts as a protein acetyltransferase. Negatively regulates aerobic respiration through mitochondrial protein lysine-acetylation. May counteract the action of the deacetylase SIRT3 by acetylating and regulating proteins of the mitochondrial respiratory chain including ATP5F1A and NDUFA9. Acts as a regulator of mTORC2 signaling in response to hypotoxic stress by mediating acetylation of RICTOR, thereby protecting RICTOR against ubiquitination and subsequent degradation by the proteasome.</text>
</comment>
<comment type="catalytic activity">
    <reaction evidence="2">
        <text>L-lysyl-[protein] + acetyl-CoA = N(6)-acetyl-L-lysyl-[protein] + CoA + H(+)</text>
        <dbReference type="Rhea" id="RHEA:45948"/>
        <dbReference type="Rhea" id="RHEA-COMP:9752"/>
        <dbReference type="Rhea" id="RHEA-COMP:10731"/>
        <dbReference type="ChEBI" id="CHEBI:15378"/>
        <dbReference type="ChEBI" id="CHEBI:29969"/>
        <dbReference type="ChEBI" id="CHEBI:57287"/>
        <dbReference type="ChEBI" id="CHEBI:57288"/>
        <dbReference type="ChEBI" id="CHEBI:61930"/>
    </reaction>
    <physiologicalReaction direction="left-to-right" evidence="2">
        <dbReference type="Rhea" id="RHEA:45949"/>
    </physiologicalReaction>
</comment>
<comment type="subunit">
    <text evidence="1 2">Component of the biogenesis of lysosome-related organelles complex 1 (BLOC-1) composed of BLOC1S1, BLOC1S2, BLOC1S3, BLOC1S4, BLOC1S5, BLOC1S6, DTNBP1/BLOC1S7 and SNAPIN/BLOC1S8. Octamer composed of one copy each BLOC1S1, BLOC1S2, BLOC1S3, BLOC1S4, BLOC1S5, BLOC1S6, DTNBP1/BLOC1S7 and SNAPIN/BLOC1S8. The BLOC-1 complex associates with the AP-3 protein complex and membrane protein cargos. Component of the BLOC-one-related complex (BORC) which is composed of BLOC1S1, BLOC1S2, BORCS5, BORCS6, BORCS7, BORCS8, KXD1 and SNAPIN. Interacts with ATP5F1A and NDUFA9; involved in their acetylation on lysine residues. Interacts with KXD1.</text>
</comment>
<comment type="subcellular location">
    <subcellularLocation>
        <location evidence="2">Mitochondrion intermembrane space</location>
    </subcellularLocation>
    <subcellularLocation>
        <location evidence="2">Mitochondrion matrix</location>
    </subcellularLocation>
    <subcellularLocation>
        <location evidence="2">Cytoplasm</location>
        <location evidence="2">Cytosol</location>
    </subcellularLocation>
    <subcellularLocation>
        <location evidence="2">Lysosome membrane</location>
    </subcellularLocation>
</comment>
<comment type="similarity">
    <text evidence="4">Belongs to the BLOC1S1 family.</text>
</comment>
<gene>
    <name type="primary">Bloc1s1</name>
</gene>
<feature type="chain" id="PRO_0000416771" description="Biogenesis of lysosome-related organelles complex 1 subunit 1">
    <location>
        <begin position="1"/>
        <end position="125"/>
    </location>
</feature>
<feature type="coiled-coil region" evidence="3">
    <location>
        <begin position="1"/>
        <end position="31"/>
    </location>
</feature>
<protein>
    <recommendedName>
        <fullName>Biogenesis of lysosome-related organelles complex 1 subunit 1</fullName>
        <shortName>BLOC-1 subunit 1</shortName>
    </recommendedName>
    <alternativeName>
        <fullName evidence="4">Protein acetyltransferase BLOC1S1</fullName>
        <ecNumber evidence="2">2.3.1.-</ecNumber>
    </alternativeName>
</protein>
<dbReference type="EC" id="2.3.1.-" evidence="2"/>
<dbReference type="EMBL" id="CH474104">
    <property type="protein sequence ID" value="EDL84784.1"/>
    <property type="molecule type" value="Genomic_DNA"/>
</dbReference>
<dbReference type="RefSeq" id="NP_001099411.2">
    <property type="nucleotide sequence ID" value="NM_001105941.2"/>
</dbReference>
<dbReference type="SMR" id="D3ZKU7"/>
<dbReference type="FunCoup" id="D3ZKU7">
    <property type="interactions" value="212"/>
</dbReference>
<dbReference type="STRING" id="10116.ENSRNOP00000010380"/>
<dbReference type="PhosphoSitePlus" id="D3ZKU7"/>
<dbReference type="PaxDb" id="10116-ENSRNOP00000010380"/>
<dbReference type="PeptideAtlas" id="D3ZKU7"/>
<dbReference type="Ensembl" id="ENSRNOT00000010380.8">
    <property type="protein sequence ID" value="ENSRNOP00000010380.4"/>
    <property type="gene ID" value="ENSRNOG00000007784.8"/>
</dbReference>
<dbReference type="GeneID" id="288785"/>
<dbReference type="KEGG" id="rno:288785"/>
<dbReference type="UCSC" id="RGD:1307564">
    <property type="organism name" value="rat"/>
</dbReference>
<dbReference type="AGR" id="RGD:1307564"/>
<dbReference type="CTD" id="2647"/>
<dbReference type="RGD" id="1307564">
    <property type="gene designation" value="Bloc1s1"/>
</dbReference>
<dbReference type="eggNOG" id="KOG3390">
    <property type="taxonomic scope" value="Eukaryota"/>
</dbReference>
<dbReference type="GeneTree" id="ENSGT00940000161168"/>
<dbReference type="HOGENOM" id="CLU_115602_3_0_1"/>
<dbReference type="InParanoid" id="D3ZKU7"/>
<dbReference type="OrthoDB" id="73695at9989"/>
<dbReference type="PhylomeDB" id="D3ZKU7"/>
<dbReference type="TreeFam" id="TF314443"/>
<dbReference type="Reactome" id="R-RNO-432720">
    <property type="pathway name" value="Lysosome Vesicle Biogenesis"/>
</dbReference>
<dbReference type="Reactome" id="R-RNO-432722">
    <property type="pathway name" value="Golgi Associated Vesicle Biogenesis"/>
</dbReference>
<dbReference type="PRO" id="PR:D3ZKU7"/>
<dbReference type="Proteomes" id="UP000002494">
    <property type="component" value="Chromosome 7"/>
</dbReference>
<dbReference type="Proteomes" id="UP000234681">
    <property type="component" value="Chromosome 7"/>
</dbReference>
<dbReference type="Bgee" id="ENSRNOG00000007784">
    <property type="expression patterns" value="Expressed in quadriceps femoris and 20 other cell types or tissues"/>
</dbReference>
<dbReference type="GO" id="GO:1904115">
    <property type="term" value="C:axon cytoplasm"/>
    <property type="evidence" value="ECO:0007669"/>
    <property type="project" value="GOC"/>
</dbReference>
<dbReference type="GO" id="GO:0031083">
    <property type="term" value="C:BLOC-1 complex"/>
    <property type="evidence" value="ECO:0000250"/>
    <property type="project" value="UniProtKB"/>
</dbReference>
<dbReference type="GO" id="GO:0099078">
    <property type="term" value="C:BORC complex"/>
    <property type="evidence" value="ECO:0000250"/>
    <property type="project" value="UniProtKB"/>
</dbReference>
<dbReference type="GO" id="GO:0005829">
    <property type="term" value="C:cytosol"/>
    <property type="evidence" value="ECO:0000250"/>
    <property type="project" value="UniProtKB"/>
</dbReference>
<dbReference type="GO" id="GO:0005769">
    <property type="term" value="C:early endosome"/>
    <property type="evidence" value="ECO:0000266"/>
    <property type="project" value="RGD"/>
</dbReference>
<dbReference type="GO" id="GO:0005765">
    <property type="term" value="C:lysosomal membrane"/>
    <property type="evidence" value="ECO:0007669"/>
    <property type="project" value="UniProtKB-SubCell"/>
</dbReference>
<dbReference type="GO" id="GO:0005758">
    <property type="term" value="C:mitochondrial intermembrane space"/>
    <property type="evidence" value="ECO:0000250"/>
    <property type="project" value="UniProtKB"/>
</dbReference>
<dbReference type="GO" id="GO:0005759">
    <property type="term" value="C:mitochondrial matrix"/>
    <property type="evidence" value="ECO:0000250"/>
    <property type="project" value="UniProtKB"/>
</dbReference>
<dbReference type="GO" id="GO:0061733">
    <property type="term" value="F:protein-lysine-acetyltransferase activity"/>
    <property type="evidence" value="ECO:0000250"/>
    <property type="project" value="UniProtKB"/>
</dbReference>
<dbReference type="GO" id="GO:0009060">
    <property type="term" value="P:aerobic respiration"/>
    <property type="evidence" value="ECO:0000250"/>
    <property type="project" value="UniProtKB"/>
</dbReference>
<dbReference type="GO" id="GO:0008089">
    <property type="term" value="P:anterograde axonal transport"/>
    <property type="evidence" value="ECO:0000250"/>
    <property type="project" value="UniProtKB"/>
</dbReference>
<dbReference type="GO" id="GO:0048490">
    <property type="term" value="P:anterograde synaptic vesicle transport"/>
    <property type="evidence" value="ECO:0000250"/>
    <property type="project" value="UniProtKB"/>
</dbReference>
<dbReference type="GO" id="GO:0016197">
    <property type="term" value="P:endosomal transport"/>
    <property type="evidence" value="ECO:0000318"/>
    <property type="project" value="GO_Central"/>
</dbReference>
<dbReference type="GO" id="GO:0032418">
    <property type="term" value="P:lysosome localization"/>
    <property type="evidence" value="ECO:0000250"/>
    <property type="project" value="UniProtKB"/>
</dbReference>
<dbReference type="GO" id="GO:0031175">
    <property type="term" value="P:neuron projection development"/>
    <property type="evidence" value="ECO:0000250"/>
    <property type="project" value="UniProtKB"/>
</dbReference>
<dbReference type="GO" id="GO:0018394">
    <property type="term" value="P:peptidyl-lysine acetylation"/>
    <property type="evidence" value="ECO:0000250"/>
    <property type="project" value="UniProtKB"/>
</dbReference>
<dbReference type="InterPro" id="IPR009395">
    <property type="entry name" value="BLOC1S1"/>
</dbReference>
<dbReference type="PANTHER" id="PTHR13073:SF0">
    <property type="entry name" value="BIOGENESIS OF LYSOSOME-RELATED ORGANELLES COMPLEX 1 SUBUNIT 1"/>
    <property type="match status" value="1"/>
</dbReference>
<dbReference type="PANTHER" id="PTHR13073">
    <property type="entry name" value="BLOC-1 COMPLEX SUBUNIT 1"/>
    <property type="match status" value="1"/>
</dbReference>
<dbReference type="Pfam" id="PF06320">
    <property type="entry name" value="GCN5L1"/>
    <property type="match status" value="1"/>
</dbReference>
<accession>D3ZKU7</accession>